<feature type="chain" id="PRO_0000101022" description="Threonine--tRNA ligase">
    <location>
        <begin position="1"/>
        <end position="653"/>
    </location>
</feature>
<feature type="domain" description="TGS" evidence="2">
    <location>
        <begin position="1"/>
        <end position="61"/>
    </location>
</feature>
<feature type="region of interest" description="Catalytic" evidence="1">
    <location>
        <begin position="243"/>
        <end position="542"/>
    </location>
</feature>
<feature type="binding site" evidence="1">
    <location>
        <position position="338"/>
    </location>
    <ligand>
        <name>Zn(2+)</name>
        <dbReference type="ChEBI" id="CHEBI:29105"/>
    </ligand>
</feature>
<feature type="binding site" evidence="1">
    <location>
        <position position="389"/>
    </location>
    <ligand>
        <name>Zn(2+)</name>
        <dbReference type="ChEBI" id="CHEBI:29105"/>
    </ligand>
</feature>
<feature type="binding site" evidence="1">
    <location>
        <position position="519"/>
    </location>
    <ligand>
        <name>Zn(2+)</name>
        <dbReference type="ChEBI" id="CHEBI:29105"/>
    </ligand>
</feature>
<protein>
    <recommendedName>
        <fullName evidence="1">Threonine--tRNA ligase</fullName>
        <ecNumber evidence="1">6.1.1.3</ecNumber>
    </recommendedName>
    <alternativeName>
        <fullName evidence="1">Threonyl-tRNA synthetase</fullName>
        <shortName evidence="1">ThrRS</shortName>
    </alternativeName>
</protein>
<sequence length="653" mass="75468">MIKITFPDGNFREYEAGITGWDIAGSISPRLQQDVLAAGVNGQVWDLHRQINEDAEVKLFKWDDAEGKHAFWHSSAHLMAEALEELYPGIKFGIGPAIENGFYYDVDPGEGISIKDADLPAIEKRMQDLAARKETIIRRDIAKADALRMFGDKDDQYKVELISELADGTITTYTQGGFTDLCRGPHLPNTGYIKAIKLLSVAGAYWRGDEKRKQLTRIYGISFPKKKMLDEYLELLEEAKKRDHRKIGKELELFAFSQNVGAGLPLWLPRGTQLRLRLEDFLKQIQKHFGYQQVITPHIGNKNLYITSGHYAKYGQDSFRPINTPQEGEEFMLKPMNCPHHCEIFKITPHSYRDLPIRLAEFGTVYRYEQSGELHGLTRVRGFTQDDAHLFCRPDQLKEEFCKVMDIIFIIFKALDFKNFEAQISLRDKVNREKYIGSEENWERAERAIIEACEEKGLPAVIEYGEAAFYGPKLDFMVKDALGRRWQLGTIQVDYNLPERFDLEYTGEDNKKHRPVMIHRAPFGSMERFVAVLIEHTAGKFPLWLTPDQVVVLPVSERFNEYAHRVAKELNQRDIRVQVDDRNEKVGRKIRDNELKRIPYMLIVGENESREEEVSVRKQGEGDMGIMKITTFAELIEKEVDDMISAWRKDYQN</sequence>
<reference key="1">
    <citation type="journal article" date="2003" name="J. Bacteriol.">
        <title>Complete genome sequence of the oral pathogenic bacterium Porphyromonas gingivalis strain W83.</title>
        <authorList>
            <person name="Nelson K.E."/>
            <person name="Fleischmann R.D."/>
            <person name="DeBoy R.T."/>
            <person name="Paulsen I.T."/>
            <person name="Fouts D.E."/>
            <person name="Eisen J.A."/>
            <person name="Daugherty S.C."/>
            <person name="Dodson R.J."/>
            <person name="Durkin A.S."/>
            <person name="Gwinn M.L."/>
            <person name="Haft D.H."/>
            <person name="Kolonay J.F."/>
            <person name="Nelson W.C."/>
            <person name="Mason T.M."/>
            <person name="Tallon L."/>
            <person name="Gray J."/>
            <person name="Granger D."/>
            <person name="Tettelin H."/>
            <person name="Dong H."/>
            <person name="Galvin J.L."/>
            <person name="Duncan M.J."/>
            <person name="Dewhirst F.E."/>
            <person name="Fraser C.M."/>
        </authorList>
    </citation>
    <scope>NUCLEOTIDE SEQUENCE [LARGE SCALE GENOMIC DNA]</scope>
    <source>
        <strain>ATCC BAA-308 / W83</strain>
    </source>
</reference>
<keyword id="KW-0030">Aminoacyl-tRNA synthetase</keyword>
<keyword id="KW-0067">ATP-binding</keyword>
<keyword id="KW-0963">Cytoplasm</keyword>
<keyword id="KW-0436">Ligase</keyword>
<keyword id="KW-0479">Metal-binding</keyword>
<keyword id="KW-0547">Nucleotide-binding</keyword>
<keyword id="KW-0648">Protein biosynthesis</keyword>
<keyword id="KW-1185">Reference proteome</keyword>
<keyword id="KW-0694">RNA-binding</keyword>
<keyword id="KW-0820">tRNA-binding</keyword>
<keyword id="KW-0862">Zinc</keyword>
<proteinExistence type="inferred from homology"/>
<gene>
    <name evidence="1" type="primary">thrS</name>
    <name type="ordered locus">PG_0992</name>
</gene>
<evidence type="ECO:0000255" key="1">
    <source>
        <dbReference type="HAMAP-Rule" id="MF_00184"/>
    </source>
</evidence>
<evidence type="ECO:0000255" key="2">
    <source>
        <dbReference type="PROSITE-ProRule" id="PRU01228"/>
    </source>
</evidence>
<name>SYT_PORGI</name>
<comment type="function">
    <text evidence="1">Catalyzes the attachment of threonine to tRNA(Thr) in a two-step reaction: L-threonine is first activated by ATP to form Thr-AMP and then transferred to the acceptor end of tRNA(Thr). Also edits incorrectly charged L-seryl-tRNA(Thr).</text>
</comment>
<comment type="catalytic activity">
    <reaction evidence="1">
        <text>tRNA(Thr) + L-threonine + ATP = L-threonyl-tRNA(Thr) + AMP + diphosphate + H(+)</text>
        <dbReference type="Rhea" id="RHEA:24624"/>
        <dbReference type="Rhea" id="RHEA-COMP:9670"/>
        <dbReference type="Rhea" id="RHEA-COMP:9704"/>
        <dbReference type="ChEBI" id="CHEBI:15378"/>
        <dbReference type="ChEBI" id="CHEBI:30616"/>
        <dbReference type="ChEBI" id="CHEBI:33019"/>
        <dbReference type="ChEBI" id="CHEBI:57926"/>
        <dbReference type="ChEBI" id="CHEBI:78442"/>
        <dbReference type="ChEBI" id="CHEBI:78534"/>
        <dbReference type="ChEBI" id="CHEBI:456215"/>
        <dbReference type="EC" id="6.1.1.3"/>
    </reaction>
</comment>
<comment type="cofactor">
    <cofactor evidence="1">
        <name>Zn(2+)</name>
        <dbReference type="ChEBI" id="CHEBI:29105"/>
    </cofactor>
    <text evidence="1">Binds 1 zinc ion per subunit.</text>
</comment>
<comment type="subunit">
    <text evidence="1">Homodimer.</text>
</comment>
<comment type="subcellular location">
    <subcellularLocation>
        <location evidence="1">Cytoplasm</location>
    </subcellularLocation>
</comment>
<comment type="similarity">
    <text evidence="1">Belongs to the class-II aminoacyl-tRNA synthetase family.</text>
</comment>
<organism>
    <name type="scientific">Porphyromonas gingivalis (strain ATCC BAA-308 / W83)</name>
    <dbReference type="NCBI Taxonomy" id="242619"/>
    <lineage>
        <taxon>Bacteria</taxon>
        <taxon>Pseudomonadati</taxon>
        <taxon>Bacteroidota</taxon>
        <taxon>Bacteroidia</taxon>
        <taxon>Bacteroidales</taxon>
        <taxon>Porphyromonadaceae</taxon>
        <taxon>Porphyromonas</taxon>
    </lineage>
</organism>
<dbReference type="EC" id="6.1.1.3" evidence="1"/>
<dbReference type="EMBL" id="AE015924">
    <property type="protein sequence ID" value="AAQ66115.1"/>
    <property type="molecule type" value="Genomic_DNA"/>
</dbReference>
<dbReference type="RefSeq" id="WP_005874077.1">
    <property type="nucleotide sequence ID" value="NC_002950.2"/>
</dbReference>
<dbReference type="SMR" id="Q7MVQ5"/>
<dbReference type="STRING" id="242619.PG_0992"/>
<dbReference type="EnsemblBacteria" id="AAQ66115">
    <property type="protein sequence ID" value="AAQ66115"/>
    <property type="gene ID" value="PG_0992"/>
</dbReference>
<dbReference type="KEGG" id="pgi:PG_0992"/>
<dbReference type="PATRIC" id="fig|242619.8.peg.918"/>
<dbReference type="eggNOG" id="COG0441">
    <property type="taxonomic scope" value="Bacteria"/>
</dbReference>
<dbReference type="HOGENOM" id="CLU_008554_0_1_10"/>
<dbReference type="BioCyc" id="PGIN242619:G1G02-925-MONOMER"/>
<dbReference type="Proteomes" id="UP000000588">
    <property type="component" value="Chromosome"/>
</dbReference>
<dbReference type="GO" id="GO:0005737">
    <property type="term" value="C:cytoplasm"/>
    <property type="evidence" value="ECO:0007669"/>
    <property type="project" value="UniProtKB-SubCell"/>
</dbReference>
<dbReference type="GO" id="GO:0005524">
    <property type="term" value="F:ATP binding"/>
    <property type="evidence" value="ECO:0007669"/>
    <property type="project" value="UniProtKB-UniRule"/>
</dbReference>
<dbReference type="GO" id="GO:0046872">
    <property type="term" value="F:metal ion binding"/>
    <property type="evidence" value="ECO:0007669"/>
    <property type="project" value="UniProtKB-KW"/>
</dbReference>
<dbReference type="GO" id="GO:0004829">
    <property type="term" value="F:threonine-tRNA ligase activity"/>
    <property type="evidence" value="ECO:0007669"/>
    <property type="project" value="UniProtKB-UniRule"/>
</dbReference>
<dbReference type="GO" id="GO:0000049">
    <property type="term" value="F:tRNA binding"/>
    <property type="evidence" value="ECO:0007669"/>
    <property type="project" value="UniProtKB-KW"/>
</dbReference>
<dbReference type="GO" id="GO:0006435">
    <property type="term" value="P:threonyl-tRNA aminoacylation"/>
    <property type="evidence" value="ECO:0007669"/>
    <property type="project" value="UniProtKB-UniRule"/>
</dbReference>
<dbReference type="CDD" id="cd01667">
    <property type="entry name" value="TGS_ThrRS"/>
    <property type="match status" value="1"/>
</dbReference>
<dbReference type="CDD" id="cd00860">
    <property type="entry name" value="ThrRS_anticodon"/>
    <property type="match status" value="1"/>
</dbReference>
<dbReference type="CDD" id="cd00771">
    <property type="entry name" value="ThrRS_core"/>
    <property type="match status" value="1"/>
</dbReference>
<dbReference type="FunFam" id="3.10.20.30:FF:000005">
    <property type="entry name" value="Threonine--tRNA ligase"/>
    <property type="match status" value="1"/>
</dbReference>
<dbReference type="FunFam" id="3.30.930.10:FF:000002">
    <property type="entry name" value="Threonine--tRNA ligase"/>
    <property type="match status" value="1"/>
</dbReference>
<dbReference type="FunFam" id="3.40.50.800:FF:000001">
    <property type="entry name" value="Threonine--tRNA ligase"/>
    <property type="match status" value="1"/>
</dbReference>
<dbReference type="FunFam" id="3.30.980.10:FF:000005">
    <property type="entry name" value="Threonyl-tRNA synthetase, mitochondrial"/>
    <property type="match status" value="1"/>
</dbReference>
<dbReference type="Gene3D" id="3.10.20.30">
    <property type="match status" value="1"/>
</dbReference>
<dbReference type="Gene3D" id="3.30.54.20">
    <property type="match status" value="1"/>
</dbReference>
<dbReference type="Gene3D" id="3.40.50.800">
    <property type="entry name" value="Anticodon-binding domain"/>
    <property type="match status" value="1"/>
</dbReference>
<dbReference type="Gene3D" id="3.30.930.10">
    <property type="entry name" value="Bira Bifunctional Protein, Domain 2"/>
    <property type="match status" value="1"/>
</dbReference>
<dbReference type="Gene3D" id="3.30.980.10">
    <property type="entry name" value="Threonyl-trna Synthetase, Chain A, domain 2"/>
    <property type="match status" value="1"/>
</dbReference>
<dbReference type="HAMAP" id="MF_00184">
    <property type="entry name" value="Thr_tRNA_synth"/>
    <property type="match status" value="1"/>
</dbReference>
<dbReference type="InterPro" id="IPR002314">
    <property type="entry name" value="aa-tRNA-synt_IIb"/>
</dbReference>
<dbReference type="InterPro" id="IPR006195">
    <property type="entry name" value="aa-tRNA-synth_II"/>
</dbReference>
<dbReference type="InterPro" id="IPR045864">
    <property type="entry name" value="aa-tRNA-synth_II/BPL/LPL"/>
</dbReference>
<dbReference type="InterPro" id="IPR004154">
    <property type="entry name" value="Anticodon-bd"/>
</dbReference>
<dbReference type="InterPro" id="IPR036621">
    <property type="entry name" value="Anticodon-bd_dom_sf"/>
</dbReference>
<dbReference type="InterPro" id="IPR012675">
    <property type="entry name" value="Beta-grasp_dom_sf"/>
</dbReference>
<dbReference type="InterPro" id="IPR004095">
    <property type="entry name" value="TGS"/>
</dbReference>
<dbReference type="InterPro" id="IPR012676">
    <property type="entry name" value="TGS-like"/>
</dbReference>
<dbReference type="InterPro" id="IPR002320">
    <property type="entry name" value="Thr-tRNA-ligase_IIa"/>
</dbReference>
<dbReference type="InterPro" id="IPR018163">
    <property type="entry name" value="Thr/Ala-tRNA-synth_IIc_edit"/>
</dbReference>
<dbReference type="InterPro" id="IPR047246">
    <property type="entry name" value="ThrRS_anticodon"/>
</dbReference>
<dbReference type="InterPro" id="IPR033728">
    <property type="entry name" value="ThrRS_core"/>
</dbReference>
<dbReference type="InterPro" id="IPR012947">
    <property type="entry name" value="tRNA_SAD"/>
</dbReference>
<dbReference type="NCBIfam" id="TIGR00418">
    <property type="entry name" value="thrS"/>
    <property type="match status" value="1"/>
</dbReference>
<dbReference type="PANTHER" id="PTHR11451:SF44">
    <property type="entry name" value="THREONINE--TRNA LIGASE, CHLOROPLASTIC_MITOCHONDRIAL 2"/>
    <property type="match status" value="1"/>
</dbReference>
<dbReference type="PANTHER" id="PTHR11451">
    <property type="entry name" value="THREONINE-TRNA LIGASE"/>
    <property type="match status" value="1"/>
</dbReference>
<dbReference type="Pfam" id="PF03129">
    <property type="entry name" value="HGTP_anticodon"/>
    <property type="match status" value="1"/>
</dbReference>
<dbReference type="Pfam" id="PF02824">
    <property type="entry name" value="TGS"/>
    <property type="match status" value="1"/>
</dbReference>
<dbReference type="Pfam" id="PF00587">
    <property type="entry name" value="tRNA-synt_2b"/>
    <property type="match status" value="1"/>
</dbReference>
<dbReference type="Pfam" id="PF07973">
    <property type="entry name" value="tRNA_SAD"/>
    <property type="match status" value="1"/>
</dbReference>
<dbReference type="PRINTS" id="PR01047">
    <property type="entry name" value="TRNASYNTHTHR"/>
</dbReference>
<dbReference type="SMART" id="SM00863">
    <property type="entry name" value="tRNA_SAD"/>
    <property type="match status" value="1"/>
</dbReference>
<dbReference type="SUPFAM" id="SSF52954">
    <property type="entry name" value="Class II aaRS ABD-related"/>
    <property type="match status" value="1"/>
</dbReference>
<dbReference type="SUPFAM" id="SSF55681">
    <property type="entry name" value="Class II aaRS and biotin synthetases"/>
    <property type="match status" value="1"/>
</dbReference>
<dbReference type="SUPFAM" id="SSF81271">
    <property type="entry name" value="TGS-like"/>
    <property type="match status" value="1"/>
</dbReference>
<dbReference type="SUPFAM" id="SSF55186">
    <property type="entry name" value="ThrRS/AlaRS common domain"/>
    <property type="match status" value="1"/>
</dbReference>
<dbReference type="PROSITE" id="PS50862">
    <property type="entry name" value="AA_TRNA_LIGASE_II"/>
    <property type="match status" value="1"/>
</dbReference>
<dbReference type="PROSITE" id="PS51880">
    <property type="entry name" value="TGS"/>
    <property type="match status" value="1"/>
</dbReference>
<accession>Q7MVQ5</accession>